<reference key="1">
    <citation type="journal article" date="1989" name="J. Biol. Chem.">
        <title>Amino acid sequence of a low molecular weight, high affinity calcium-binding protein from the optic lobe of the squid Loligo pealei.</title>
        <authorList>
            <person name="Head J.F."/>
        </authorList>
    </citation>
    <scope>PROTEIN SEQUENCE</scope>
    <scope>ACETYLATION AT ALA-1</scope>
</reference>
<reference key="2">
    <citation type="journal article" date="1988" name="J. Biol. Chem.">
        <title>Calcium-binding properties of two high affinity calcium-binding proteins from squid optic lobe.</title>
        <authorList>
            <person name="Sheldon A."/>
            <person name="Head J.F."/>
        </authorList>
    </citation>
    <scope>CALCIUM-BINDING DATA</scope>
</reference>
<sequence length="149" mass="16852">AKELSEKQIAEIKDAFDMFDIDGDGQITSKELRSVMKSLGRTPSDAELEEMIREVDTDGNGTIEYAEFVEMMAKQMGPTDPEKEMREAFRVFDKDGNGLITAAELRQVMANFSDEKLTSEEISEMIREADIDGDGMVNYEEFVKMMTPK</sequence>
<evidence type="ECO:0000255" key="1">
    <source>
        <dbReference type="PROSITE-ProRule" id="PRU00448"/>
    </source>
</evidence>
<evidence type="ECO:0000269" key="2">
    <source>
    </source>
</evidence>
<evidence type="ECO:0000305" key="3"/>
<name>CABO_DORPE</name>
<feature type="chain" id="PRO_0000073558" description="Squidulin">
    <location>
        <begin position="1"/>
        <end position="149"/>
    </location>
</feature>
<feature type="domain" description="EF-hand 1" evidence="1">
    <location>
        <begin position="7"/>
        <end position="42"/>
    </location>
</feature>
<feature type="domain" description="EF-hand 2" evidence="1">
    <location>
        <begin position="43"/>
        <end position="78"/>
    </location>
</feature>
<feature type="domain" description="EF-hand 3" evidence="1">
    <location>
        <begin position="80"/>
        <end position="115"/>
    </location>
</feature>
<feature type="domain" description="EF-hand 4" evidence="1">
    <location>
        <begin position="117"/>
        <end position="149"/>
    </location>
</feature>
<feature type="binding site" evidence="1">
    <location>
        <position position="20"/>
    </location>
    <ligand>
        <name>Ca(2+)</name>
        <dbReference type="ChEBI" id="CHEBI:29108"/>
        <label>1</label>
    </ligand>
</feature>
<feature type="binding site" evidence="1">
    <location>
        <position position="22"/>
    </location>
    <ligand>
        <name>Ca(2+)</name>
        <dbReference type="ChEBI" id="CHEBI:29108"/>
        <label>1</label>
    </ligand>
</feature>
<feature type="binding site" evidence="1">
    <location>
        <position position="24"/>
    </location>
    <ligand>
        <name>Ca(2+)</name>
        <dbReference type="ChEBI" id="CHEBI:29108"/>
        <label>1</label>
    </ligand>
</feature>
<feature type="binding site" evidence="1">
    <location>
        <position position="26"/>
    </location>
    <ligand>
        <name>Ca(2+)</name>
        <dbReference type="ChEBI" id="CHEBI:29108"/>
        <label>1</label>
    </ligand>
</feature>
<feature type="binding site" evidence="1">
    <location>
        <position position="31"/>
    </location>
    <ligand>
        <name>Ca(2+)</name>
        <dbReference type="ChEBI" id="CHEBI:29108"/>
        <label>1</label>
    </ligand>
</feature>
<feature type="binding site" evidence="1">
    <location>
        <position position="56"/>
    </location>
    <ligand>
        <name>Ca(2+)</name>
        <dbReference type="ChEBI" id="CHEBI:29108"/>
        <label>2</label>
    </ligand>
</feature>
<feature type="binding site" evidence="1">
    <location>
        <position position="58"/>
    </location>
    <ligand>
        <name>Ca(2+)</name>
        <dbReference type="ChEBI" id="CHEBI:29108"/>
        <label>2</label>
    </ligand>
</feature>
<feature type="binding site" evidence="1">
    <location>
        <position position="60"/>
    </location>
    <ligand>
        <name>Ca(2+)</name>
        <dbReference type="ChEBI" id="CHEBI:29108"/>
        <label>2</label>
    </ligand>
</feature>
<feature type="binding site" evidence="1">
    <location>
        <position position="62"/>
    </location>
    <ligand>
        <name>Ca(2+)</name>
        <dbReference type="ChEBI" id="CHEBI:29108"/>
        <label>2</label>
    </ligand>
</feature>
<feature type="binding site" evidence="1">
    <location>
        <position position="67"/>
    </location>
    <ligand>
        <name>Ca(2+)</name>
        <dbReference type="ChEBI" id="CHEBI:29108"/>
        <label>2</label>
    </ligand>
</feature>
<feature type="binding site" evidence="1">
    <location>
        <position position="93"/>
    </location>
    <ligand>
        <name>Ca(2+)</name>
        <dbReference type="ChEBI" id="CHEBI:29108"/>
        <label>3</label>
    </ligand>
</feature>
<feature type="binding site" evidence="1">
    <location>
        <position position="95"/>
    </location>
    <ligand>
        <name>Ca(2+)</name>
        <dbReference type="ChEBI" id="CHEBI:29108"/>
        <label>3</label>
    </ligand>
</feature>
<feature type="binding site" evidence="1">
    <location>
        <position position="97"/>
    </location>
    <ligand>
        <name>Ca(2+)</name>
        <dbReference type="ChEBI" id="CHEBI:29108"/>
        <label>3</label>
    </ligand>
</feature>
<feature type="binding site" evidence="1">
    <location>
        <position position="104"/>
    </location>
    <ligand>
        <name>Ca(2+)</name>
        <dbReference type="ChEBI" id="CHEBI:29108"/>
        <label>3</label>
    </ligand>
</feature>
<feature type="binding site" evidence="1">
    <location>
        <position position="130"/>
    </location>
    <ligand>
        <name>Ca(2+)</name>
        <dbReference type="ChEBI" id="CHEBI:29108"/>
        <label>4</label>
    </ligand>
</feature>
<feature type="binding site" evidence="1">
    <location>
        <position position="132"/>
    </location>
    <ligand>
        <name>Ca(2+)</name>
        <dbReference type="ChEBI" id="CHEBI:29108"/>
        <label>4</label>
    </ligand>
</feature>
<feature type="binding site" evidence="1">
    <location>
        <position position="134"/>
    </location>
    <ligand>
        <name>Ca(2+)</name>
        <dbReference type="ChEBI" id="CHEBI:29108"/>
        <label>4</label>
    </ligand>
</feature>
<feature type="binding site" evidence="1">
    <location>
        <position position="136"/>
    </location>
    <ligand>
        <name>Ca(2+)</name>
        <dbReference type="ChEBI" id="CHEBI:29108"/>
        <label>4</label>
    </ligand>
</feature>
<feature type="binding site" evidence="1">
    <location>
        <position position="141"/>
    </location>
    <ligand>
        <name>Ca(2+)</name>
        <dbReference type="ChEBI" id="CHEBI:29108"/>
        <label>4</label>
    </ligand>
</feature>
<feature type="modified residue" description="N-acetylalanine" evidence="2">
    <location>
        <position position="1"/>
    </location>
</feature>
<proteinExistence type="evidence at protein level"/>
<comment type="function">
    <text>Not known. This protein has four functional calcium-binding sites.</text>
</comment>
<comment type="similarity">
    <text evidence="3">Belongs to the calmodulin family.</text>
</comment>
<dbReference type="SMR" id="P14533"/>
<dbReference type="iPTMnet" id="P14533"/>
<dbReference type="GO" id="GO:0016460">
    <property type="term" value="C:myosin II complex"/>
    <property type="evidence" value="ECO:0007669"/>
    <property type="project" value="TreeGrafter"/>
</dbReference>
<dbReference type="GO" id="GO:0005509">
    <property type="term" value="F:calcium ion binding"/>
    <property type="evidence" value="ECO:0007669"/>
    <property type="project" value="InterPro"/>
</dbReference>
<dbReference type="CDD" id="cd00051">
    <property type="entry name" value="EFh"/>
    <property type="match status" value="2"/>
</dbReference>
<dbReference type="FunFam" id="1.10.238.10:FF:000003">
    <property type="entry name" value="Calmodulin A"/>
    <property type="match status" value="1"/>
</dbReference>
<dbReference type="Gene3D" id="1.10.238.10">
    <property type="entry name" value="EF-hand"/>
    <property type="match status" value="2"/>
</dbReference>
<dbReference type="InterPro" id="IPR050230">
    <property type="entry name" value="CALM/Myosin/TropC-like"/>
</dbReference>
<dbReference type="InterPro" id="IPR011992">
    <property type="entry name" value="EF-hand-dom_pair"/>
</dbReference>
<dbReference type="InterPro" id="IPR018247">
    <property type="entry name" value="EF_Hand_1_Ca_BS"/>
</dbReference>
<dbReference type="InterPro" id="IPR002048">
    <property type="entry name" value="EF_hand_dom"/>
</dbReference>
<dbReference type="PANTHER" id="PTHR23048:SF0">
    <property type="entry name" value="CALMODULIN LIKE 3"/>
    <property type="match status" value="1"/>
</dbReference>
<dbReference type="PANTHER" id="PTHR23048">
    <property type="entry name" value="MYOSIN LIGHT CHAIN 1, 3"/>
    <property type="match status" value="1"/>
</dbReference>
<dbReference type="Pfam" id="PF13499">
    <property type="entry name" value="EF-hand_7"/>
    <property type="match status" value="2"/>
</dbReference>
<dbReference type="SMART" id="SM00054">
    <property type="entry name" value="EFh"/>
    <property type="match status" value="4"/>
</dbReference>
<dbReference type="SUPFAM" id="SSF47473">
    <property type="entry name" value="EF-hand"/>
    <property type="match status" value="1"/>
</dbReference>
<dbReference type="PROSITE" id="PS00018">
    <property type="entry name" value="EF_HAND_1"/>
    <property type="match status" value="4"/>
</dbReference>
<dbReference type="PROSITE" id="PS50222">
    <property type="entry name" value="EF_HAND_2"/>
    <property type="match status" value="4"/>
</dbReference>
<keyword id="KW-0007">Acetylation</keyword>
<keyword id="KW-0106">Calcium</keyword>
<keyword id="KW-0903">Direct protein sequencing</keyword>
<keyword id="KW-0479">Metal-binding</keyword>
<keyword id="KW-0677">Repeat</keyword>
<accession>P14533</accession>
<organism>
    <name type="scientific">Doryteuthis pealeii</name>
    <name type="common">Longfin inshore squid</name>
    <name type="synonym">Loligo pealeii</name>
    <dbReference type="NCBI Taxonomy" id="1051067"/>
    <lineage>
        <taxon>Eukaryota</taxon>
        <taxon>Metazoa</taxon>
        <taxon>Spiralia</taxon>
        <taxon>Lophotrochozoa</taxon>
        <taxon>Mollusca</taxon>
        <taxon>Cephalopoda</taxon>
        <taxon>Coleoidea</taxon>
        <taxon>Decapodiformes</taxon>
        <taxon>Myopsida</taxon>
        <taxon>Loliginidae</taxon>
        <taxon>Doryteuthis</taxon>
    </lineage>
</organism>
<protein>
    <recommendedName>
        <fullName>Squidulin</fullName>
    </recommendedName>
    <alternativeName>
        <fullName>Optic lobe calcium-binding protein</fullName>
    </alternativeName>
    <alternativeName>
        <fullName>SCABP</fullName>
    </alternativeName>
</protein>